<organism>
    <name type="scientific">Xanthomonas axonopodis pv. citri (strain 306)</name>
    <dbReference type="NCBI Taxonomy" id="190486"/>
    <lineage>
        <taxon>Bacteria</taxon>
        <taxon>Pseudomonadati</taxon>
        <taxon>Pseudomonadota</taxon>
        <taxon>Gammaproteobacteria</taxon>
        <taxon>Lysobacterales</taxon>
        <taxon>Lysobacteraceae</taxon>
        <taxon>Xanthomonas</taxon>
    </lineage>
</organism>
<accession>Q8PRG0</accession>
<keyword id="KW-0067">ATP-binding</keyword>
<keyword id="KW-0963">Cytoplasm</keyword>
<keyword id="KW-0227">DNA damage</keyword>
<keyword id="KW-0234">DNA repair</keyword>
<keyword id="KW-0235">DNA replication</keyword>
<keyword id="KW-0238">DNA-binding</keyword>
<keyword id="KW-0547">Nucleotide-binding</keyword>
<keyword id="KW-0742">SOS response</keyword>
<proteinExistence type="inferred from homology"/>
<dbReference type="EMBL" id="AE008923">
    <property type="protein sequence ID" value="AAM34895.1"/>
    <property type="molecule type" value="Genomic_DNA"/>
</dbReference>
<dbReference type="RefSeq" id="WP_003482213.1">
    <property type="nucleotide sequence ID" value="NC_003919.1"/>
</dbReference>
<dbReference type="SMR" id="Q8PRG0"/>
<dbReference type="GeneID" id="66909221"/>
<dbReference type="KEGG" id="xac:XAC0003"/>
<dbReference type="eggNOG" id="COG1195">
    <property type="taxonomic scope" value="Bacteria"/>
</dbReference>
<dbReference type="HOGENOM" id="CLU_040267_0_0_6"/>
<dbReference type="Proteomes" id="UP000000576">
    <property type="component" value="Chromosome"/>
</dbReference>
<dbReference type="GO" id="GO:0005737">
    <property type="term" value="C:cytoplasm"/>
    <property type="evidence" value="ECO:0007669"/>
    <property type="project" value="UniProtKB-SubCell"/>
</dbReference>
<dbReference type="GO" id="GO:0005524">
    <property type="term" value="F:ATP binding"/>
    <property type="evidence" value="ECO:0007669"/>
    <property type="project" value="UniProtKB-UniRule"/>
</dbReference>
<dbReference type="GO" id="GO:0003697">
    <property type="term" value="F:single-stranded DNA binding"/>
    <property type="evidence" value="ECO:0007669"/>
    <property type="project" value="UniProtKB-UniRule"/>
</dbReference>
<dbReference type="GO" id="GO:0006260">
    <property type="term" value="P:DNA replication"/>
    <property type="evidence" value="ECO:0007669"/>
    <property type="project" value="UniProtKB-UniRule"/>
</dbReference>
<dbReference type="GO" id="GO:0000731">
    <property type="term" value="P:DNA synthesis involved in DNA repair"/>
    <property type="evidence" value="ECO:0007669"/>
    <property type="project" value="TreeGrafter"/>
</dbReference>
<dbReference type="GO" id="GO:0006302">
    <property type="term" value="P:double-strand break repair"/>
    <property type="evidence" value="ECO:0007669"/>
    <property type="project" value="TreeGrafter"/>
</dbReference>
<dbReference type="GO" id="GO:0009432">
    <property type="term" value="P:SOS response"/>
    <property type="evidence" value="ECO:0007669"/>
    <property type="project" value="UniProtKB-UniRule"/>
</dbReference>
<dbReference type="FunFam" id="1.20.1050.90:FF:000006">
    <property type="entry name" value="DNA replication and repair protein RecF"/>
    <property type="match status" value="1"/>
</dbReference>
<dbReference type="Gene3D" id="3.40.50.300">
    <property type="entry name" value="P-loop containing nucleotide triphosphate hydrolases"/>
    <property type="match status" value="1"/>
</dbReference>
<dbReference type="Gene3D" id="1.20.1050.90">
    <property type="entry name" value="RecF/RecN/SMC, N-terminal domain"/>
    <property type="match status" value="1"/>
</dbReference>
<dbReference type="HAMAP" id="MF_00365">
    <property type="entry name" value="RecF"/>
    <property type="match status" value="1"/>
</dbReference>
<dbReference type="InterPro" id="IPR001238">
    <property type="entry name" value="DNA-binding_RecF"/>
</dbReference>
<dbReference type="InterPro" id="IPR018078">
    <property type="entry name" value="DNA-binding_RecF_CS"/>
</dbReference>
<dbReference type="InterPro" id="IPR027417">
    <property type="entry name" value="P-loop_NTPase"/>
</dbReference>
<dbReference type="InterPro" id="IPR003395">
    <property type="entry name" value="RecF/RecN/SMC_N"/>
</dbReference>
<dbReference type="InterPro" id="IPR042174">
    <property type="entry name" value="RecF_2"/>
</dbReference>
<dbReference type="NCBIfam" id="TIGR00611">
    <property type="entry name" value="recf"/>
    <property type="match status" value="1"/>
</dbReference>
<dbReference type="PANTHER" id="PTHR32182">
    <property type="entry name" value="DNA REPLICATION AND REPAIR PROTEIN RECF"/>
    <property type="match status" value="1"/>
</dbReference>
<dbReference type="PANTHER" id="PTHR32182:SF0">
    <property type="entry name" value="DNA REPLICATION AND REPAIR PROTEIN RECF"/>
    <property type="match status" value="1"/>
</dbReference>
<dbReference type="Pfam" id="PF02463">
    <property type="entry name" value="SMC_N"/>
    <property type="match status" value="1"/>
</dbReference>
<dbReference type="SUPFAM" id="SSF52540">
    <property type="entry name" value="P-loop containing nucleoside triphosphate hydrolases"/>
    <property type="match status" value="1"/>
</dbReference>
<dbReference type="PROSITE" id="PS00617">
    <property type="entry name" value="RECF_1"/>
    <property type="match status" value="1"/>
</dbReference>
<dbReference type="PROSITE" id="PS00618">
    <property type="entry name" value="RECF_2"/>
    <property type="match status" value="1"/>
</dbReference>
<feature type="chain" id="PRO_0000196489" description="DNA replication and repair protein RecF">
    <location>
        <begin position="1"/>
        <end position="368"/>
    </location>
</feature>
<feature type="binding site" evidence="1">
    <location>
        <begin position="30"/>
        <end position="37"/>
    </location>
    <ligand>
        <name>ATP</name>
        <dbReference type="ChEBI" id="CHEBI:30616"/>
    </ligand>
</feature>
<evidence type="ECO:0000255" key="1">
    <source>
        <dbReference type="HAMAP-Rule" id="MF_00365"/>
    </source>
</evidence>
<gene>
    <name evidence="1" type="primary">recF</name>
    <name type="ordered locus">XAC0003</name>
</gene>
<comment type="function">
    <text evidence="1">The RecF protein is involved in DNA metabolism; it is required for DNA replication and normal SOS inducibility. RecF binds preferentially to single-stranded, linear DNA. It also seems to bind ATP.</text>
</comment>
<comment type="subcellular location">
    <subcellularLocation>
        <location evidence="1">Cytoplasm</location>
    </subcellularLocation>
</comment>
<comment type="similarity">
    <text evidence="1">Belongs to the RecF family.</text>
</comment>
<sequence>MHVVRLSIHRLRRFQTVELHPSSALNLLTGDNGAGKTSVLEALHLMAYGRSFRGRVRDGLIQQGANDLEVFVEWKEGGGAAVERTRRAGLRHSGQEWTGRLDGEDVAQLGSLCAALAVVTFEPGSHVLISGGGEPRRRFLDWGLFHVEPDFLTLWRRYARALKQRNALLKQGAQPRMLDAWDNELAESGETLTSRRMRYLERLQDRLVPVADAIAPALGLSALTFAPGWKRHEVSLADALLLARERDRQNGYTSQGPHRADWMPSFHALPGKDALSRGQAKLTALACLLAQAEDFAFERGEWPVIALDDLGSELDRHHQGRVLQRLASAPAQVLITATETPPGLADAAALLQQFHVEHGQIARQATVN</sequence>
<protein>
    <recommendedName>
        <fullName evidence="1">DNA replication and repair protein RecF</fullName>
    </recommendedName>
</protein>
<reference key="1">
    <citation type="journal article" date="2002" name="Nature">
        <title>Comparison of the genomes of two Xanthomonas pathogens with differing host specificities.</title>
        <authorList>
            <person name="da Silva A.C.R."/>
            <person name="Ferro J.A."/>
            <person name="Reinach F.C."/>
            <person name="Farah C.S."/>
            <person name="Furlan L.R."/>
            <person name="Quaggio R.B."/>
            <person name="Monteiro-Vitorello C.B."/>
            <person name="Van Sluys M.A."/>
            <person name="Almeida N.F. Jr."/>
            <person name="Alves L.M.C."/>
            <person name="do Amaral A.M."/>
            <person name="Bertolini M.C."/>
            <person name="Camargo L.E.A."/>
            <person name="Camarotte G."/>
            <person name="Cannavan F."/>
            <person name="Cardozo J."/>
            <person name="Chambergo F."/>
            <person name="Ciapina L.P."/>
            <person name="Cicarelli R.M.B."/>
            <person name="Coutinho L.L."/>
            <person name="Cursino-Santos J.R."/>
            <person name="El-Dorry H."/>
            <person name="Faria J.B."/>
            <person name="Ferreira A.J.S."/>
            <person name="Ferreira R.C.C."/>
            <person name="Ferro M.I.T."/>
            <person name="Formighieri E.F."/>
            <person name="Franco M.C."/>
            <person name="Greggio C.C."/>
            <person name="Gruber A."/>
            <person name="Katsuyama A.M."/>
            <person name="Kishi L.T."/>
            <person name="Leite R.P."/>
            <person name="Lemos E.G.M."/>
            <person name="Lemos M.V.F."/>
            <person name="Locali E.C."/>
            <person name="Machado M.A."/>
            <person name="Madeira A.M.B.N."/>
            <person name="Martinez-Rossi N.M."/>
            <person name="Martins E.C."/>
            <person name="Meidanis J."/>
            <person name="Menck C.F.M."/>
            <person name="Miyaki C.Y."/>
            <person name="Moon D.H."/>
            <person name="Moreira L.M."/>
            <person name="Novo M.T.M."/>
            <person name="Okura V.K."/>
            <person name="Oliveira M.C."/>
            <person name="Oliveira V.R."/>
            <person name="Pereira H.A."/>
            <person name="Rossi A."/>
            <person name="Sena J.A.D."/>
            <person name="Silva C."/>
            <person name="de Souza R.F."/>
            <person name="Spinola L.A.F."/>
            <person name="Takita M.A."/>
            <person name="Tamura R.E."/>
            <person name="Teixeira E.C."/>
            <person name="Tezza R.I.D."/>
            <person name="Trindade dos Santos M."/>
            <person name="Truffi D."/>
            <person name="Tsai S.M."/>
            <person name="White F.F."/>
            <person name="Setubal J.C."/>
            <person name="Kitajima J.P."/>
        </authorList>
    </citation>
    <scope>NUCLEOTIDE SEQUENCE [LARGE SCALE GENOMIC DNA]</scope>
    <source>
        <strain>306</strain>
    </source>
</reference>
<name>RECF_XANAC</name>